<name>RSMH_STAAT</name>
<dbReference type="EC" id="2.1.1.199" evidence="1"/>
<dbReference type="EMBL" id="CP000730">
    <property type="protein sequence ID" value="ABX29136.1"/>
    <property type="molecule type" value="Genomic_DNA"/>
</dbReference>
<dbReference type="RefSeq" id="WP_000468384.1">
    <property type="nucleotide sequence ID" value="NC_010079.1"/>
</dbReference>
<dbReference type="SMR" id="A8Z3M0"/>
<dbReference type="KEGG" id="sax:USA300HOU_1119"/>
<dbReference type="HOGENOM" id="CLU_038422_2_0_9"/>
<dbReference type="GO" id="GO:0005737">
    <property type="term" value="C:cytoplasm"/>
    <property type="evidence" value="ECO:0007669"/>
    <property type="project" value="UniProtKB-SubCell"/>
</dbReference>
<dbReference type="GO" id="GO:0071424">
    <property type="term" value="F:rRNA (cytosine-N4-)-methyltransferase activity"/>
    <property type="evidence" value="ECO:0007669"/>
    <property type="project" value="UniProtKB-UniRule"/>
</dbReference>
<dbReference type="GO" id="GO:0070475">
    <property type="term" value="P:rRNA base methylation"/>
    <property type="evidence" value="ECO:0007669"/>
    <property type="project" value="UniProtKB-UniRule"/>
</dbReference>
<dbReference type="FunFam" id="1.10.150.170:FF:000001">
    <property type="entry name" value="Ribosomal RNA small subunit methyltransferase H"/>
    <property type="match status" value="1"/>
</dbReference>
<dbReference type="Gene3D" id="1.10.150.170">
    <property type="entry name" value="Putative methyltransferase TM0872, insert domain"/>
    <property type="match status" value="1"/>
</dbReference>
<dbReference type="Gene3D" id="3.40.50.150">
    <property type="entry name" value="Vaccinia Virus protein VP39"/>
    <property type="match status" value="1"/>
</dbReference>
<dbReference type="HAMAP" id="MF_01007">
    <property type="entry name" value="16SrRNA_methyltr_H"/>
    <property type="match status" value="1"/>
</dbReference>
<dbReference type="InterPro" id="IPR002903">
    <property type="entry name" value="RsmH"/>
</dbReference>
<dbReference type="InterPro" id="IPR023397">
    <property type="entry name" value="SAM-dep_MeTrfase_MraW_recog"/>
</dbReference>
<dbReference type="InterPro" id="IPR029063">
    <property type="entry name" value="SAM-dependent_MTases_sf"/>
</dbReference>
<dbReference type="NCBIfam" id="TIGR00006">
    <property type="entry name" value="16S rRNA (cytosine(1402)-N(4))-methyltransferase RsmH"/>
    <property type="match status" value="1"/>
</dbReference>
<dbReference type="PANTHER" id="PTHR11265:SF0">
    <property type="entry name" value="12S RRNA N4-METHYLCYTIDINE METHYLTRANSFERASE"/>
    <property type="match status" value="1"/>
</dbReference>
<dbReference type="PANTHER" id="PTHR11265">
    <property type="entry name" value="S-ADENOSYL-METHYLTRANSFERASE MRAW"/>
    <property type="match status" value="1"/>
</dbReference>
<dbReference type="Pfam" id="PF01795">
    <property type="entry name" value="Methyltransf_5"/>
    <property type="match status" value="1"/>
</dbReference>
<dbReference type="PIRSF" id="PIRSF004486">
    <property type="entry name" value="MraW"/>
    <property type="match status" value="1"/>
</dbReference>
<dbReference type="SUPFAM" id="SSF81799">
    <property type="entry name" value="Putative methyltransferase TM0872, insert domain"/>
    <property type="match status" value="1"/>
</dbReference>
<dbReference type="SUPFAM" id="SSF53335">
    <property type="entry name" value="S-adenosyl-L-methionine-dependent methyltransferases"/>
    <property type="match status" value="1"/>
</dbReference>
<keyword id="KW-0963">Cytoplasm</keyword>
<keyword id="KW-0489">Methyltransferase</keyword>
<keyword id="KW-0698">rRNA processing</keyword>
<keyword id="KW-0949">S-adenosyl-L-methionine</keyword>
<keyword id="KW-0808">Transferase</keyword>
<comment type="function">
    <text evidence="1">Specifically methylates the N4 position of cytidine in position 1402 (C1402) of 16S rRNA.</text>
</comment>
<comment type="catalytic activity">
    <reaction evidence="1">
        <text>cytidine(1402) in 16S rRNA + S-adenosyl-L-methionine = N(4)-methylcytidine(1402) in 16S rRNA + S-adenosyl-L-homocysteine + H(+)</text>
        <dbReference type="Rhea" id="RHEA:42928"/>
        <dbReference type="Rhea" id="RHEA-COMP:10286"/>
        <dbReference type="Rhea" id="RHEA-COMP:10287"/>
        <dbReference type="ChEBI" id="CHEBI:15378"/>
        <dbReference type="ChEBI" id="CHEBI:57856"/>
        <dbReference type="ChEBI" id="CHEBI:59789"/>
        <dbReference type="ChEBI" id="CHEBI:74506"/>
        <dbReference type="ChEBI" id="CHEBI:82748"/>
        <dbReference type="EC" id="2.1.1.199"/>
    </reaction>
</comment>
<comment type="subcellular location">
    <subcellularLocation>
        <location evidence="1">Cytoplasm</location>
    </subcellularLocation>
</comment>
<comment type="similarity">
    <text evidence="1">Belongs to the methyltransferase superfamily. RsmH family.</text>
</comment>
<organism>
    <name type="scientific">Staphylococcus aureus (strain USA300 / TCH1516)</name>
    <dbReference type="NCBI Taxonomy" id="451516"/>
    <lineage>
        <taxon>Bacteria</taxon>
        <taxon>Bacillati</taxon>
        <taxon>Bacillota</taxon>
        <taxon>Bacilli</taxon>
        <taxon>Bacillales</taxon>
        <taxon>Staphylococcaceae</taxon>
        <taxon>Staphylococcus</taxon>
    </lineage>
</organism>
<accession>A8Z3M0</accession>
<gene>
    <name evidence="1" type="primary">rsmH</name>
    <name type="synonym">mraW</name>
    <name type="ordered locus">USA300HOU_1119</name>
</gene>
<proteinExistence type="inferred from homology"/>
<sequence>MFHHISVMLNETIDYLNVKENGVYIDCTLGGAGHALYLLNQLNDDGRLIAIDQDQTAIDNAKEVLKDHLHKVTFVHSNFRELTQILKDLNIEKVDGIYYDLGVSSPQLDIPERGFSYHHDATLDMRMDQTQELTAYEIVNNWSYEALVKIFYRYGEEKFSKQIARRIEAHREQQPITTTLELVDIIKEGIPAKARRKGGHPAKRVFQALRIAVNDELSAFEDSIEQAIELVKVDGRISVITFHSLEDRLCKQVFQEYEKGPEVPRGLPVIPEAYTPKLKRVNRKPITATEEDLDDNNRARSAKLRVAEILK</sequence>
<protein>
    <recommendedName>
        <fullName evidence="1">Ribosomal RNA small subunit methyltransferase H</fullName>
        <ecNumber evidence="1">2.1.1.199</ecNumber>
    </recommendedName>
    <alternativeName>
        <fullName evidence="1">16S rRNA m(4)C1402 methyltransferase</fullName>
    </alternativeName>
    <alternativeName>
        <fullName evidence="1">rRNA (cytosine-N(4)-)-methyltransferase RsmH</fullName>
    </alternativeName>
</protein>
<evidence type="ECO:0000255" key="1">
    <source>
        <dbReference type="HAMAP-Rule" id="MF_01007"/>
    </source>
</evidence>
<reference key="1">
    <citation type="journal article" date="2007" name="BMC Microbiol.">
        <title>Subtle genetic changes enhance virulence of methicillin resistant and sensitive Staphylococcus aureus.</title>
        <authorList>
            <person name="Highlander S.K."/>
            <person name="Hulten K.G."/>
            <person name="Qin X."/>
            <person name="Jiang H."/>
            <person name="Yerrapragada S."/>
            <person name="Mason E.O. Jr."/>
            <person name="Shang Y."/>
            <person name="Williams T.M."/>
            <person name="Fortunov R.M."/>
            <person name="Liu Y."/>
            <person name="Igboeli O."/>
            <person name="Petrosino J."/>
            <person name="Tirumalai M."/>
            <person name="Uzman A."/>
            <person name="Fox G.E."/>
            <person name="Cardenas A.M."/>
            <person name="Muzny D.M."/>
            <person name="Hemphill L."/>
            <person name="Ding Y."/>
            <person name="Dugan S."/>
            <person name="Blyth P.R."/>
            <person name="Buhay C.J."/>
            <person name="Dinh H.H."/>
            <person name="Hawes A.C."/>
            <person name="Holder M."/>
            <person name="Kovar C.L."/>
            <person name="Lee S.L."/>
            <person name="Liu W."/>
            <person name="Nazareth L.V."/>
            <person name="Wang Q."/>
            <person name="Zhou J."/>
            <person name="Kaplan S.L."/>
            <person name="Weinstock G.M."/>
        </authorList>
    </citation>
    <scope>NUCLEOTIDE SEQUENCE [LARGE SCALE GENOMIC DNA]</scope>
    <source>
        <strain>USA300 / TCH1516</strain>
    </source>
</reference>
<feature type="chain" id="PRO_0000387139" description="Ribosomal RNA small subunit methyltransferase H">
    <location>
        <begin position="1"/>
        <end position="311"/>
    </location>
</feature>
<feature type="binding site" evidence="1">
    <location>
        <begin position="32"/>
        <end position="34"/>
    </location>
    <ligand>
        <name>S-adenosyl-L-methionine</name>
        <dbReference type="ChEBI" id="CHEBI:59789"/>
    </ligand>
</feature>
<feature type="binding site" evidence="1">
    <location>
        <position position="52"/>
    </location>
    <ligand>
        <name>S-adenosyl-L-methionine</name>
        <dbReference type="ChEBI" id="CHEBI:59789"/>
    </ligand>
</feature>
<feature type="binding site" evidence="1">
    <location>
        <position position="79"/>
    </location>
    <ligand>
        <name>S-adenosyl-L-methionine</name>
        <dbReference type="ChEBI" id="CHEBI:59789"/>
    </ligand>
</feature>
<feature type="binding site" evidence="1">
    <location>
        <position position="100"/>
    </location>
    <ligand>
        <name>S-adenosyl-L-methionine</name>
        <dbReference type="ChEBI" id="CHEBI:59789"/>
    </ligand>
</feature>
<feature type="binding site" evidence="1">
    <location>
        <position position="107"/>
    </location>
    <ligand>
        <name>S-adenosyl-L-methionine</name>
        <dbReference type="ChEBI" id="CHEBI:59789"/>
    </ligand>
</feature>